<name>PLEK_RAT</name>
<gene>
    <name type="primary">Plek</name>
</gene>
<reference key="1">
    <citation type="journal article" date="2004" name="Genome Res.">
        <title>The status, quality, and expansion of the NIH full-length cDNA project: the Mammalian Gene Collection (MGC).</title>
        <authorList>
            <consortium name="The MGC Project Team"/>
        </authorList>
    </citation>
    <scope>NUCLEOTIDE SEQUENCE [LARGE SCALE MRNA]</scope>
    <source>
        <tissue>Spleen</tissue>
    </source>
</reference>
<reference key="2">
    <citation type="journal article" date="2012" name="Nat. Commun.">
        <title>Quantitative maps of protein phosphorylation sites across 14 different rat organs and tissues.</title>
        <authorList>
            <person name="Lundby A."/>
            <person name="Secher A."/>
            <person name="Lage K."/>
            <person name="Nordsborg N.B."/>
            <person name="Dmytriyev A."/>
            <person name="Lundby C."/>
            <person name="Olsen J.V."/>
        </authorList>
    </citation>
    <scope>PHOSPHORYLATION [LARGE SCALE ANALYSIS] AT SER-117</scope>
    <scope>IDENTIFICATION BY MASS SPECTROMETRY [LARGE SCALE ANALYSIS]</scope>
</reference>
<dbReference type="EMBL" id="BC098846">
    <property type="protein sequence ID" value="AAH98846.1"/>
    <property type="molecule type" value="mRNA"/>
</dbReference>
<dbReference type="RefSeq" id="NP_001020921.1">
    <property type="nucleotide sequence ID" value="NM_001025750.1"/>
</dbReference>
<dbReference type="RefSeq" id="XP_006251582.1">
    <property type="nucleotide sequence ID" value="XM_006251520.1"/>
</dbReference>
<dbReference type="SMR" id="Q4KM33"/>
<dbReference type="FunCoup" id="Q4KM33">
    <property type="interactions" value="339"/>
</dbReference>
<dbReference type="STRING" id="10116.ENSRNOP00000007044"/>
<dbReference type="iPTMnet" id="Q4KM33"/>
<dbReference type="PhosphoSitePlus" id="Q4KM33"/>
<dbReference type="PaxDb" id="10116-ENSRNOP00000007044"/>
<dbReference type="Ensembl" id="ENSRNOT00000007044.6">
    <property type="protein sequence ID" value="ENSRNOP00000007044.3"/>
    <property type="gene ID" value="ENSRNOG00000005214.7"/>
</dbReference>
<dbReference type="Ensembl" id="ENSRNOT00000094345.1">
    <property type="protein sequence ID" value="ENSRNOP00000083092.1"/>
    <property type="gene ID" value="ENSRNOG00000005214.7"/>
</dbReference>
<dbReference type="GeneID" id="364206"/>
<dbReference type="KEGG" id="rno:364206"/>
<dbReference type="UCSC" id="RGD:1308269">
    <property type="organism name" value="rat"/>
</dbReference>
<dbReference type="AGR" id="RGD:1308269"/>
<dbReference type="CTD" id="5341"/>
<dbReference type="RGD" id="1308269">
    <property type="gene designation" value="Plek"/>
</dbReference>
<dbReference type="eggNOG" id="ENOG502QQIA">
    <property type="taxonomic scope" value="Eukaryota"/>
</dbReference>
<dbReference type="GeneTree" id="ENSGT00940000157885"/>
<dbReference type="HOGENOM" id="CLU_067828_0_0_1"/>
<dbReference type="InParanoid" id="Q4KM33"/>
<dbReference type="OrthoDB" id="3967at9989"/>
<dbReference type="PhylomeDB" id="Q4KM33"/>
<dbReference type="TreeFam" id="TF332246"/>
<dbReference type="Reactome" id="R-RNO-114608">
    <property type="pathway name" value="Platelet degranulation"/>
</dbReference>
<dbReference type="PRO" id="PR:Q4KM33"/>
<dbReference type="Proteomes" id="UP000002494">
    <property type="component" value="Chromosome 14"/>
</dbReference>
<dbReference type="Bgee" id="ENSRNOG00000005214">
    <property type="expression patterns" value="Expressed in spleen and 19 other cell types or tissues"/>
</dbReference>
<dbReference type="ExpressionAtlas" id="Q4KM33">
    <property type="expression patterns" value="baseline and differential"/>
</dbReference>
<dbReference type="GO" id="GO:0005737">
    <property type="term" value="C:cytoplasm"/>
    <property type="evidence" value="ECO:0000266"/>
    <property type="project" value="RGD"/>
</dbReference>
<dbReference type="GO" id="GO:0005886">
    <property type="term" value="C:plasma membrane"/>
    <property type="evidence" value="ECO:0000318"/>
    <property type="project" value="GO_Central"/>
</dbReference>
<dbReference type="GO" id="GO:0032587">
    <property type="term" value="C:ruffle membrane"/>
    <property type="evidence" value="ECO:0000266"/>
    <property type="project" value="RGD"/>
</dbReference>
<dbReference type="GO" id="GO:0043325">
    <property type="term" value="F:phosphatidylinositol-3,4-bisphosphate binding"/>
    <property type="evidence" value="ECO:0000266"/>
    <property type="project" value="RGD"/>
</dbReference>
<dbReference type="GO" id="GO:0042803">
    <property type="term" value="F:protein homodimerization activity"/>
    <property type="evidence" value="ECO:0000266"/>
    <property type="project" value="RGD"/>
</dbReference>
<dbReference type="GO" id="GO:0005080">
    <property type="term" value="F:protein kinase C binding"/>
    <property type="evidence" value="ECO:0000266"/>
    <property type="project" value="RGD"/>
</dbReference>
<dbReference type="GO" id="GO:0030036">
    <property type="term" value="P:actin cytoskeleton organization"/>
    <property type="evidence" value="ECO:0000266"/>
    <property type="project" value="RGD"/>
</dbReference>
<dbReference type="GO" id="GO:0030030">
    <property type="term" value="P:cell projection organization"/>
    <property type="evidence" value="ECO:0000266"/>
    <property type="project" value="RGD"/>
</dbReference>
<dbReference type="GO" id="GO:0030866">
    <property type="term" value="P:cortical actin cytoskeleton organization"/>
    <property type="evidence" value="ECO:0000266"/>
    <property type="project" value="RGD"/>
</dbReference>
<dbReference type="GO" id="GO:0002244">
    <property type="term" value="P:hematopoietic progenitor cell differentiation"/>
    <property type="evidence" value="ECO:0000266"/>
    <property type="project" value="RGD"/>
</dbReference>
<dbReference type="GO" id="GO:0007229">
    <property type="term" value="P:integrin-mediated signaling pathway"/>
    <property type="evidence" value="ECO:0000266"/>
    <property type="project" value="RGD"/>
</dbReference>
<dbReference type="GO" id="GO:0035556">
    <property type="term" value="P:intracellular signal transduction"/>
    <property type="evidence" value="ECO:0007669"/>
    <property type="project" value="InterPro"/>
</dbReference>
<dbReference type="GO" id="GO:0045744">
    <property type="term" value="P:negative regulation of G protein-coupled receptor signaling pathway"/>
    <property type="evidence" value="ECO:0000266"/>
    <property type="project" value="RGD"/>
</dbReference>
<dbReference type="GO" id="GO:0010920">
    <property type="term" value="P:negative regulation of inositol phosphate biosynthetic process"/>
    <property type="evidence" value="ECO:0000266"/>
    <property type="project" value="RGD"/>
</dbReference>
<dbReference type="GO" id="GO:0070495">
    <property type="term" value="P:negative regulation of thrombin-activated receptor signaling pathway"/>
    <property type="evidence" value="ECO:0000266"/>
    <property type="project" value="RGD"/>
</dbReference>
<dbReference type="GO" id="GO:0007200">
    <property type="term" value="P:phospholipase C-activating G protein-coupled receptor signaling pathway"/>
    <property type="evidence" value="ECO:0000266"/>
    <property type="project" value="RGD"/>
</dbReference>
<dbReference type="GO" id="GO:0030845">
    <property type="term" value="P:phospholipase C-inhibiting G protein-coupled receptor signaling pathway"/>
    <property type="evidence" value="ECO:0000266"/>
    <property type="project" value="RGD"/>
</dbReference>
<dbReference type="GO" id="GO:0070527">
    <property type="term" value="P:platelet aggregation"/>
    <property type="evidence" value="ECO:0000266"/>
    <property type="project" value="RGD"/>
</dbReference>
<dbReference type="GO" id="GO:0002576">
    <property type="term" value="P:platelet degranulation"/>
    <property type="evidence" value="ECO:0000266"/>
    <property type="project" value="RGD"/>
</dbReference>
<dbReference type="GO" id="GO:0032233">
    <property type="term" value="P:positive regulation of actin filament bundle assembly"/>
    <property type="evidence" value="ECO:0000266"/>
    <property type="project" value="RGD"/>
</dbReference>
<dbReference type="GO" id="GO:0030836">
    <property type="term" value="P:positive regulation of actin filament depolymerization"/>
    <property type="evidence" value="ECO:0000266"/>
    <property type="project" value="RGD"/>
</dbReference>
<dbReference type="GO" id="GO:0033625">
    <property type="term" value="P:positive regulation of integrin activation"/>
    <property type="evidence" value="ECO:0000266"/>
    <property type="project" value="RGD"/>
</dbReference>
<dbReference type="GO" id="GO:0010572">
    <property type="term" value="P:positive regulation of platelet activation"/>
    <property type="evidence" value="ECO:0000266"/>
    <property type="project" value="RGD"/>
</dbReference>
<dbReference type="GO" id="GO:0070560">
    <property type="term" value="P:protein secretion by platelet"/>
    <property type="evidence" value="ECO:0000266"/>
    <property type="project" value="RGD"/>
</dbReference>
<dbReference type="GO" id="GO:0060305">
    <property type="term" value="P:regulation of cell diameter"/>
    <property type="evidence" value="ECO:0000266"/>
    <property type="project" value="RGD"/>
</dbReference>
<dbReference type="GO" id="GO:0031529">
    <property type="term" value="P:ruffle organization"/>
    <property type="evidence" value="ECO:0000266"/>
    <property type="project" value="RGD"/>
</dbReference>
<dbReference type="GO" id="GO:0070493">
    <property type="term" value="P:thrombin-activated receptor signaling pathway"/>
    <property type="evidence" value="ECO:0000266"/>
    <property type="project" value="RGD"/>
</dbReference>
<dbReference type="GO" id="GO:0006904">
    <property type="term" value="P:vesicle docking involved in exocytosis"/>
    <property type="evidence" value="ECO:0000266"/>
    <property type="project" value="RGD"/>
</dbReference>
<dbReference type="CDD" id="cd04445">
    <property type="entry name" value="DEP_PLEK1"/>
    <property type="match status" value="1"/>
</dbReference>
<dbReference type="CDD" id="cd13301">
    <property type="entry name" value="PH1_Pleckstrin_2"/>
    <property type="match status" value="1"/>
</dbReference>
<dbReference type="CDD" id="cd13302">
    <property type="entry name" value="PH2_Pleckstrin_2"/>
    <property type="match status" value="1"/>
</dbReference>
<dbReference type="FunFam" id="1.10.10.10:FF:000269">
    <property type="entry name" value="Pleckstrin"/>
    <property type="match status" value="1"/>
</dbReference>
<dbReference type="FunFam" id="2.30.29.30:FF:000223">
    <property type="entry name" value="Pleckstrin"/>
    <property type="match status" value="1"/>
</dbReference>
<dbReference type="FunFam" id="2.30.29.30:FF:000226">
    <property type="entry name" value="Pleckstrin"/>
    <property type="match status" value="1"/>
</dbReference>
<dbReference type="Gene3D" id="2.30.29.30">
    <property type="entry name" value="Pleckstrin-homology domain (PH domain)/Phosphotyrosine-binding domain (PTB)"/>
    <property type="match status" value="2"/>
</dbReference>
<dbReference type="Gene3D" id="1.10.10.10">
    <property type="entry name" value="Winged helix-like DNA-binding domain superfamily/Winged helix DNA-binding domain"/>
    <property type="match status" value="1"/>
</dbReference>
<dbReference type="InterPro" id="IPR000591">
    <property type="entry name" value="DEP_dom"/>
</dbReference>
<dbReference type="InterPro" id="IPR011993">
    <property type="entry name" value="PH-like_dom_sf"/>
</dbReference>
<dbReference type="InterPro" id="IPR001849">
    <property type="entry name" value="PH_domain"/>
</dbReference>
<dbReference type="InterPro" id="IPR037370">
    <property type="entry name" value="Pleckstrin"/>
</dbReference>
<dbReference type="InterPro" id="IPR037371">
    <property type="entry name" value="PLEK_DEP"/>
</dbReference>
<dbReference type="InterPro" id="IPR036388">
    <property type="entry name" value="WH-like_DNA-bd_sf"/>
</dbReference>
<dbReference type="InterPro" id="IPR036390">
    <property type="entry name" value="WH_DNA-bd_sf"/>
</dbReference>
<dbReference type="PANTHER" id="PTHR12092">
    <property type="entry name" value="PLECKSTRIN"/>
    <property type="match status" value="1"/>
</dbReference>
<dbReference type="PANTHER" id="PTHR12092:SF1">
    <property type="entry name" value="PLECKSTRIN"/>
    <property type="match status" value="1"/>
</dbReference>
<dbReference type="Pfam" id="PF00610">
    <property type="entry name" value="DEP"/>
    <property type="match status" value="1"/>
</dbReference>
<dbReference type="Pfam" id="PF00169">
    <property type="entry name" value="PH"/>
    <property type="match status" value="2"/>
</dbReference>
<dbReference type="SMART" id="SM00049">
    <property type="entry name" value="DEP"/>
    <property type="match status" value="1"/>
</dbReference>
<dbReference type="SMART" id="SM00233">
    <property type="entry name" value="PH"/>
    <property type="match status" value="2"/>
</dbReference>
<dbReference type="SUPFAM" id="SSF50729">
    <property type="entry name" value="PH domain-like"/>
    <property type="match status" value="2"/>
</dbReference>
<dbReference type="SUPFAM" id="SSF46785">
    <property type="entry name" value="Winged helix' DNA-binding domain"/>
    <property type="match status" value="1"/>
</dbReference>
<dbReference type="PROSITE" id="PS50186">
    <property type="entry name" value="DEP"/>
    <property type="match status" value="1"/>
</dbReference>
<dbReference type="PROSITE" id="PS50003">
    <property type="entry name" value="PH_DOMAIN"/>
    <property type="match status" value="2"/>
</dbReference>
<keyword id="KW-0007">Acetylation</keyword>
<keyword id="KW-0597">Phosphoprotein</keyword>
<keyword id="KW-1185">Reference proteome</keyword>
<keyword id="KW-0677">Repeat</keyword>
<comment type="function">
    <text evidence="1">Major protein kinase C substrate of platelets.</text>
</comment>
<evidence type="ECO:0000250" key="1"/>
<evidence type="ECO:0000250" key="2">
    <source>
        <dbReference type="UniProtKB" id="P08567"/>
    </source>
</evidence>
<evidence type="ECO:0000255" key="3">
    <source>
        <dbReference type="PROSITE-ProRule" id="PRU00066"/>
    </source>
</evidence>
<evidence type="ECO:0000255" key="4">
    <source>
        <dbReference type="PROSITE-ProRule" id="PRU00145"/>
    </source>
</evidence>
<evidence type="ECO:0007744" key="5">
    <source>
    </source>
</evidence>
<protein>
    <recommendedName>
        <fullName>Pleckstrin</fullName>
    </recommendedName>
</protein>
<organism>
    <name type="scientific">Rattus norvegicus</name>
    <name type="common">Rat</name>
    <dbReference type="NCBI Taxonomy" id="10116"/>
    <lineage>
        <taxon>Eukaryota</taxon>
        <taxon>Metazoa</taxon>
        <taxon>Chordata</taxon>
        <taxon>Craniata</taxon>
        <taxon>Vertebrata</taxon>
        <taxon>Euteleostomi</taxon>
        <taxon>Mammalia</taxon>
        <taxon>Eutheria</taxon>
        <taxon>Euarchontoglires</taxon>
        <taxon>Glires</taxon>
        <taxon>Rodentia</taxon>
        <taxon>Myomorpha</taxon>
        <taxon>Muroidea</taxon>
        <taxon>Muridae</taxon>
        <taxon>Murinae</taxon>
        <taxon>Rattus</taxon>
    </lineage>
</organism>
<sequence>MEPKRIREGYLVKKGSVFNTWKPMWVVLLEDGIEFYKKKSDNNPKGMIPLKGSTLTSPCQDFGKRMFVLKITTTKQQDHFFQAAYLEERDAWVRDIKKAIKCIEGGQKFARKSTRRSIRLPETIDLGALYLSMKDPEKGIKELNLEKDKKVFNHCFTGSGVIDWLVSNKLVRNRQEGLMISASLLSEGYLQPASDLSKNAADGIAENPFLDNPDAFYYFPDSGFFCEENSSDDDIILKEEFRGIIIKQGCLLKQGHRRKNWKVRKFILREDPAYLHYYDPAGGEDPLGAIHLRGCVVTSVESNPDGKKSDEENLFEIITADEVHYYMQAATAKERTEWIKAIQVASRTGK</sequence>
<proteinExistence type="evidence at protein level"/>
<feature type="chain" id="PRO_0000053861" description="Pleckstrin">
    <location>
        <begin position="1"/>
        <end position="350"/>
    </location>
</feature>
<feature type="domain" description="PH 1" evidence="4">
    <location>
        <begin position="4"/>
        <end position="101"/>
    </location>
</feature>
<feature type="domain" description="DEP" evidence="3">
    <location>
        <begin position="136"/>
        <end position="221"/>
    </location>
</feature>
<feature type="domain" description="PH 2" evidence="4">
    <location>
        <begin position="244"/>
        <end position="347"/>
    </location>
</feature>
<feature type="modified residue" description="N6-acetyllysine" evidence="2">
    <location>
        <position position="64"/>
    </location>
</feature>
<feature type="modified residue" description="Phosphoserine" evidence="2">
    <location>
        <position position="113"/>
    </location>
</feature>
<feature type="modified residue" description="Phosphoserine" evidence="5">
    <location>
        <position position="117"/>
    </location>
</feature>
<accession>Q4KM33</accession>